<gene>
    <name type="primary">ENO</name>
</gene>
<feature type="chain" id="PRO_0000134088" description="Enolase">
    <location>
        <begin position="1"/>
        <end position="445"/>
    </location>
</feature>
<feature type="active site" description="Proton donor" evidence="1">
    <location>
        <position position="217"/>
    </location>
</feature>
<feature type="active site" description="Proton acceptor" evidence="1">
    <location>
        <position position="355"/>
    </location>
</feature>
<feature type="binding site" evidence="1">
    <location>
        <position position="165"/>
    </location>
    <ligand>
        <name>substrate</name>
    </ligand>
</feature>
<feature type="binding site" evidence="1">
    <location>
        <position position="174"/>
    </location>
    <ligand>
        <name>substrate</name>
    </ligand>
</feature>
<feature type="binding site" evidence="1">
    <location>
        <position position="252"/>
    </location>
    <ligand>
        <name>Mg(2+)</name>
        <dbReference type="ChEBI" id="CHEBI:18420"/>
    </ligand>
</feature>
<feature type="binding site" evidence="1">
    <location>
        <position position="303"/>
    </location>
    <ligand>
        <name>Mg(2+)</name>
        <dbReference type="ChEBI" id="CHEBI:18420"/>
    </ligand>
</feature>
<feature type="binding site" evidence="1">
    <location>
        <position position="303"/>
    </location>
    <ligand>
        <name>substrate</name>
    </ligand>
</feature>
<feature type="binding site" evidence="1">
    <location>
        <position position="330"/>
    </location>
    <ligand>
        <name>Mg(2+)</name>
        <dbReference type="ChEBI" id="CHEBI:18420"/>
    </ligand>
</feature>
<feature type="binding site" evidence="1">
    <location>
        <position position="330"/>
    </location>
    <ligand>
        <name>substrate</name>
    </ligand>
</feature>
<feature type="binding site" evidence="1">
    <location>
        <begin position="382"/>
        <end position="385"/>
    </location>
    <ligand>
        <name>substrate</name>
    </ligand>
</feature>
<feature type="binding site" evidence="1">
    <location>
        <position position="406"/>
    </location>
    <ligand>
        <name>substrate</name>
    </ligand>
</feature>
<evidence type="ECO:0000250" key="1"/>
<evidence type="ECO:0000305" key="2"/>
<protein>
    <recommendedName>
        <fullName>Enolase</fullName>
        <ecNumber>4.2.1.11</ecNumber>
    </recommendedName>
    <alternativeName>
        <fullName>2-phospho-D-glycerate hydro-lyase</fullName>
    </alternativeName>
    <alternativeName>
        <fullName>2-phosphoglycerate dehydratase</fullName>
    </alternativeName>
</protein>
<reference key="1">
    <citation type="submission" date="2001-02" db="EMBL/GenBank/DDBJ databases">
        <title>Molecular cloning of a cDNA encoding an enolase of Eimeria tenella.</title>
        <authorList>
            <person name="Labbe M."/>
            <person name="Pery P."/>
        </authorList>
    </citation>
    <scope>NUCLEOTIDE SEQUENCE [MRNA]</scope>
    <source>
        <strain>PAPt38</strain>
    </source>
</reference>
<proteinExistence type="evidence at transcript level"/>
<sequence length="445" mass="47975">MVAIVEVKAREILDSRGNPTVEVDLKTEQGCFRAAVPSGASTGIYEALELRDGDKTRYNGKGVLKAVENVNKVLAPALVGKDCREQAALDRLMVEELDGSKNEWGWSKSVLGANAILAVSMALCRAGAAAKGIPLYKYVAQLAGHEAPEFVLPVPCFNVLNGGKHAGNSLAMQEFMVAPVGARSFGEALRMGAEVYQALQRLLKAKFGLAATNVGDEGGFAPDIKDPREALGLLVEAIRAAGHEGKVKIMADVAASEFYSKEAKSYDLDFKSPAADAHRLLTGDQLKDLFKEWSEEFPIVSIEDPFDQDDFSSYAALTAEIGSKVQVVGDDLLVTNPARIRKALQHKACNALLLKVNQIGSITEAIEACKLAQASGWGVMVSHRSGETEDSFIADLVVGLRTGQIKTGAPCRSERLCKYNQLLRIEEQLQGRCTYAGENFRNPSN</sequence>
<accession>Q967Y8</accession>
<dbReference type="EC" id="4.2.1.11"/>
<dbReference type="EMBL" id="AF353515">
    <property type="protein sequence ID" value="AAK38886.1"/>
    <property type="molecule type" value="mRNA"/>
</dbReference>
<dbReference type="SMR" id="Q967Y8"/>
<dbReference type="VEuPathDB" id="ToxoDB:ETH2_1011400"/>
<dbReference type="VEuPathDB" id="ToxoDB:ETH_00024910"/>
<dbReference type="BRENDA" id="4.2.1.11">
    <property type="organism ID" value="2046"/>
</dbReference>
<dbReference type="UniPathway" id="UPA00109">
    <property type="reaction ID" value="UER00187"/>
</dbReference>
<dbReference type="GO" id="GO:0000015">
    <property type="term" value="C:phosphopyruvate hydratase complex"/>
    <property type="evidence" value="ECO:0007669"/>
    <property type="project" value="InterPro"/>
</dbReference>
<dbReference type="GO" id="GO:0000287">
    <property type="term" value="F:magnesium ion binding"/>
    <property type="evidence" value="ECO:0007669"/>
    <property type="project" value="InterPro"/>
</dbReference>
<dbReference type="GO" id="GO:0004634">
    <property type="term" value="F:phosphopyruvate hydratase activity"/>
    <property type="evidence" value="ECO:0007669"/>
    <property type="project" value="UniProtKB-EC"/>
</dbReference>
<dbReference type="GO" id="GO:0006096">
    <property type="term" value="P:glycolytic process"/>
    <property type="evidence" value="ECO:0007669"/>
    <property type="project" value="UniProtKB-UniPathway"/>
</dbReference>
<dbReference type="CDD" id="cd03313">
    <property type="entry name" value="enolase"/>
    <property type="match status" value="1"/>
</dbReference>
<dbReference type="FunFam" id="3.30.390.10:FF:000001">
    <property type="entry name" value="Enolase"/>
    <property type="match status" value="1"/>
</dbReference>
<dbReference type="FunFam" id="3.20.20.120:FF:000002">
    <property type="entry name" value="Enolase 1"/>
    <property type="match status" value="1"/>
</dbReference>
<dbReference type="Gene3D" id="3.20.20.120">
    <property type="entry name" value="Enolase-like C-terminal domain"/>
    <property type="match status" value="1"/>
</dbReference>
<dbReference type="Gene3D" id="3.30.390.10">
    <property type="entry name" value="Enolase-like, N-terminal domain"/>
    <property type="match status" value="1"/>
</dbReference>
<dbReference type="HAMAP" id="MF_00318">
    <property type="entry name" value="Enolase"/>
    <property type="match status" value="1"/>
</dbReference>
<dbReference type="InterPro" id="IPR000941">
    <property type="entry name" value="Enolase"/>
</dbReference>
<dbReference type="InterPro" id="IPR036849">
    <property type="entry name" value="Enolase-like_C_sf"/>
</dbReference>
<dbReference type="InterPro" id="IPR029017">
    <property type="entry name" value="Enolase-like_N"/>
</dbReference>
<dbReference type="InterPro" id="IPR020810">
    <property type="entry name" value="Enolase_C"/>
</dbReference>
<dbReference type="InterPro" id="IPR020809">
    <property type="entry name" value="Enolase_CS"/>
</dbReference>
<dbReference type="InterPro" id="IPR020811">
    <property type="entry name" value="Enolase_N"/>
</dbReference>
<dbReference type="NCBIfam" id="TIGR01060">
    <property type="entry name" value="eno"/>
    <property type="match status" value="1"/>
</dbReference>
<dbReference type="PANTHER" id="PTHR11902">
    <property type="entry name" value="ENOLASE"/>
    <property type="match status" value="1"/>
</dbReference>
<dbReference type="PANTHER" id="PTHR11902:SF1">
    <property type="entry name" value="ENOLASE"/>
    <property type="match status" value="1"/>
</dbReference>
<dbReference type="Pfam" id="PF00113">
    <property type="entry name" value="Enolase_C"/>
    <property type="match status" value="1"/>
</dbReference>
<dbReference type="Pfam" id="PF03952">
    <property type="entry name" value="Enolase_N"/>
    <property type="match status" value="1"/>
</dbReference>
<dbReference type="PIRSF" id="PIRSF001400">
    <property type="entry name" value="Enolase"/>
    <property type="match status" value="1"/>
</dbReference>
<dbReference type="PRINTS" id="PR00148">
    <property type="entry name" value="ENOLASE"/>
</dbReference>
<dbReference type="SFLD" id="SFLDS00001">
    <property type="entry name" value="Enolase"/>
    <property type="match status" value="1"/>
</dbReference>
<dbReference type="SFLD" id="SFLDF00002">
    <property type="entry name" value="enolase"/>
    <property type="match status" value="1"/>
</dbReference>
<dbReference type="SMART" id="SM01192">
    <property type="entry name" value="Enolase_C"/>
    <property type="match status" value="1"/>
</dbReference>
<dbReference type="SMART" id="SM01193">
    <property type="entry name" value="Enolase_N"/>
    <property type="match status" value="1"/>
</dbReference>
<dbReference type="SUPFAM" id="SSF51604">
    <property type="entry name" value="Enolase C-terminal domain-like"/>
    <property type="match status" value="1"/>
</dbReference>
<dbReference type="SUPFAM" id="SSF54826">
    <property type="entry name" value="Enolase N-terminal domain-like"/>
    <property type="match status" value="1"/>
</dbReference>
<dbReference type="PROSITE" id="PS00164">
    <property type="entry name" value="ENOLASE"/>
    <property type="match status" value="1"/>
</dbReference>
<name>ENO_EIMTE</name>
<keyword id="KW-0963">Cytoplasm</keyword>
<keyword id="KW-0324">Glycolysis</keyword>
<keyword id="KW-0456">Lyase</keyword>
<keyword id="KW-0460">Magnesium</keyword>
<keyword id="KW-0479">Metal-binding</keyword>
<comment type="catalytic activity">
    <reaction>
        <text>(2R)-2-phosphoglycerate = phosphoenolpyruvate + H2O</text>
        <dbReference type="Rhea" id="RHEA:10164"/>
        <dbReference type="ChEBI" id="CHEBI:15377"/>
        <dbReference type="ChEBI" id="CHEBI:58289"/>
        <dbReference type="ChEBI" id="CHEBI:58702"/>
        <dbReference type="EC" id="4.2.1.11"/>
    </reaction>
</comment>
<comment type="cofactor">
    <cofactor evidence="1">
        <name>Mg(2+)</name>
        <dbReference type="ChEBI" id="CHEBI:18420"/>
    </cofactor>
    <text evidence="1">Mg(2+) is required for catalysis and for stabilizing the dimer.</text>
</comment>
<comment type="pathway">
    <text>Carbohydrate degradation; glycolysis; pyruvate from D-glyceraldehyde 3-phosphate: step 4/5.</text>
</comment>
<comment type="subunit">
    <text evidence="1">Homodimer.</text>
</comment>
<comment type="subcellular location">
    <subcellularLocation>
        <location evidence="1">Cytoplasm</location>
    </subcellularLocation>
</comment>
<comment type="similarity">
    <text evidence="2">Belongs to the enolase family.</text>
</comment>
<organism>
    <name type="scientific">Eimeria tenella</name>
    <name type="common">Coccidian parasite</name>
    <dbReference type="NCBI Taxonomy" id="5802"/>
    <lineage>
        <taxon>Eukaryota</taxon>
        <taxon>Sar</taxon>
        <taxon>Alveolata</taxon>
        <taxon>Apicomplexa</taxon>
        <taxon>Conoidasida</taxon>
        <taxon>Coccidia</taxon>
        <taxon>Eucoccidiorida</taxon>
        <taxon>Eimeriorina</taxon>
        <taxon>Eimeriidae</taxon>
        <taxon>Eimeria</taxon>
    </lineage>
</organism>